<sequence length="349" mass="38355">MTEMSFLNSEVLAGDLMSPFDQSGLGAEESLGLLDDYLEVAKHLKPHGFSSDKAGSSEWPAMDDGLASASDTGKEDAFSGTDWMLEKMDLKEFDFDALFRMDDLETMPDELLTTLDDTCDLFAPLVQETNKEPPQTVNPIGHLPESLIKVDQVAPFTFLQPFPCSPGVLSSTPEHSFSLELGSEVDISEGDRKPDSAAYITLIPPCVKEEDTPSDNDSGICMSPESYLGSPQHSPSTSRAPPDNLPSPGGSRGSPRPKPYDPPGVSLTAKVKTEKLDKKLKKMEQNKTAATRYRQKKRAEQEALTGECKELEKKNEALKEKADSLAKEIQYLKDLIEEVRKARGKKRVP</sequence>
<name>ATF4_MOUSE</name>
<keyword id="KW-0002">3D-structure</keyword>
<keyword id="KW-0007">Acetylation</keyword>
<keyword id="KW-0010">Activator</keyword>
<keyword id="KW-0090">Biological rhythms</keyword>
<keyword id="KW-1003">Cell membrane</keyword>
<keyword id="KW-0963">Cytoplasm</keyword>
<keyword id="KW-0206">Cytoskeleton</keyword>
<keyword id="KW-0238">DNA-binding</keyword>
<keyword id="KW-0379">Hydroxylation</keyword>
<keyword id="KW-1017">Isopeptide bond</keyword>
<keyword id="KW-0472">Membrane</keyword>
<keyword id="KW-0539">Nucleus</keyword>
<keyword id="KW-0597">Phosphoprotein</keyword>
<keyword id="KW-1185">Reference proteome</keyword>
<keyword id="KW-0678">Repressor</keyword>
<keyword id="KW-0804">Transcription</keyword>
<keyword id="KW-0805">Transcription regulation</keyword>
<keyword id="KW-0832">Ubl conjugation</keyword>
<accession>Q06507</accession>
<accession>Q5U4B2</accession>
<accession>Q61906</accession>
<protein>
    <recommendedName>
        <fullName evidence="35">Cyclic AMP-dependent transcription factor ATF-4</fullName>
        <shortName evidence="35">cAMP-dependent transcription factor ATF-4</shortName>
    </recommendedName>
    <alternativeName>
        <fullName evidence="33">Activating transcription factor 4</fullName>
    </alternativeName>
    <alternativeName>
        <fullName evidence="34">C/EBP-related ATF</fullName>
        <shortName evidence="34">C/ATF</shortName>
    </alternativeName>
    <alternativeName>
        <fullName evidence="32">Cyclic AMP-responsive element-binding protein 2</fullName>
        <shortName evidence="32">CREB-2</shortName>
        <shortName evidence="32">cAMP-responsive element-binding protein 2</shortName>
    </alternativeName>
</protein>
<organism>
    <name type="scientific">Mus musculus</name>
    <name type="common">Mouse</name>
    <dbReference type="NCBI Taxonomy" id="10090"/>
    <lineage>
        <taxon>Eukaryota</taxon>
        <taxon>Metazoa</taxon>
        <taxon>Chordata</taxon>
        <taxon>Craniata</taxon>
        <taxon>Vertebrata</taxon>
        <taxon>Euteleostomi</taxon>
        <taxon>Mammalia</taxon>
        <taxon>Eutheria</taxon>
        <taxon>Euarchontoglires</taxon>
        <taxon>Glires</taxon>
        <taxon>Rodentia</taxon>
        <taxon>Myomorpha</taxon>
        <taxon>Muroidea</taxon>
        <taxon>Muridae</taxon>
        <taxon>Murinae</taxon>
        <taxon>Mus</taxon>
        <taxon>Mus</taxon>
    </lineage>
</organism>
<gene>
    <name evidence="31 37" type="primary">Atf4</name>
    <name evidence="32" type="synonym">Creb2</name>
</gene>
<comment type="function">
    <text evidence="2 6 7 9 10 11 12 13 15 18 20 21 22 23 25 26 28 29 30">Transcription factor that binds the cAMP response element (CRE) (consensus: 5'-GTGACGT[AC][AG]-3') and displays two biological functions, as regulator of metabolic and redox processes under normal cellular conditions, and as master transcription factor during integrated stress response (ISR) (PubMed:11106749, PubMed:12667446, PubMed:23624402, PubMed:8506317). Binds to asymmetric CRE's as a heterodimer and to palindromic CRE's as a homodimer (PubMed:23624402, PubMed:8506317). Core effector of the ISR, which is required for adaptation to various stress such as endoplasmic reticulum (ER) stress, amino acid starvation, mitochondrial stress or oxidative stress (PubMed:11106749, PubMed:12667446). During ISR, ATF4 translation is induced via an alternative ribosome translation re-initiation mechanism in response to EIF2S1/eIF-2-alpha phosphorylation, and stress-induced ATF4 acts as a master transcription factor of stress-responsive genes in order to promote cell recovery (PubMed:11106749, PubMed:12667446). Promotes the transcription of genes linked to amino acid sufficiency and resistance to oxidative stress to protect cells against metabolic consequences of ER oxidation (PubMed:12667446). Activates the transcription of NLRP1, possibly in concert with other factors in response to ER stress (By similarity). Activates the transcription of asparagine synthetase (ASNS) in response to amino acid deprivation or ER stress (PubMed:15775988, PubMed:21159964). However, when associated with DDIT3/CHOP, the transcriptional activation of the ASNS gene is inhibited in response to amino acid deprivation (By similarity). Together with DDIT3/CHOP, mediates programmed cell death by promoting the expression of genes involved in cellular amino acid metabolic processes, mRNA translation and the terminal unfolded protein response (terminal UPR), a cellular response that elicits programmed cell death when ER stress is prolonged and unresolved (PubMed:23624402). Activates the expression of COX7A2L/SCAF1 downstream of the EIF2AK3/PERK-mediated unfolded protein response, thereby promoting formation of respiratory chain supercomplexes and increasing mitochondrial oxidative phosphorylation (PubMed:31023583). Together with DDIT3/CHOP, activates the transcription of the IRS-regulator TRIB3 and promotes ER stress-induced neuronal cell death by regulating the expression of BBC3/PUMA in response to ER stress (PubMed:15775988, PubMed:17369260, PubMed:21159964). May cooperate with the UPR transcriptional regulator QRICH1 to regulate ER protein homeostasis which is critical for cell viability in response to ER stress (By similarity). In the absence of stress, ATF4 translation is at low levels and it is required for normal metabolic processes such as embryonic lens formation, fetal liver hematopoiesis, bone development and synaptic plasticity (PubMed:10096021, PubMed:10885750, PubMed:11806972, PubMed:12925279, PubMed:15109498, PubMed:22298775). Acts as a regulator of osteoblast differentiation in response to phosphorylation by RPS6KA3/RSK2: phosphorylation in osteoblasts enhances transactivation activity and promotes expression of osteoblast-specific genes and post-transcriptionally regulates the synthesis of Type I collagen, the main constituent of the bone matrix (PubMed:15109498). Cooperates with FOXO1 in osteoblasts to regulate glucose homeostasis through suppression of beta-cell production and decrease in insulin production (PubMed:22298775). Activates transcription of SIRT4 (PubMed:23663782). Regulates the circadian expression of the core clock component PER2 and the serotonin transporter SLC6A4 (PubMed:21768648, PubMed:22572884). Binds in a circadian time-dependent manner to the cAMP response elements (CRE) in the SLC6A4 and PER2 promoters and periodically activates the transcription of these genes (PubMed:21768648, PubMed:22572884). Mainly acts as a transcriptional activator in cellular stress adaptation, but it can also act as a transcriptional repressor: acts as a regulator of synaptic plasticity by repressing transcription, thereby inhibiting induction and maintenance of long-term memory (PubMed:12925279). Regulates synaptic functions via interaction with DISC1 in neurons, which inhibits ATF4 transcription factor activity by disrupting ATF4 dimerization and DNA-binding (PubMed:31444471).</text>
</comment>
<comment type="subunit">
    <text evidence="2 3 8 16 17 18 22 24 25 29">Binds DNA as a homodimer and as a heterodimer (PubMed:23624402). Heterodimer; heterodimerizes with CEBPB (PubMed:11018027). Heterodimer; heterodimerizes with DDIT3/CHOP (PubMed:23624402). Interacts with CEP290 (via an N-terminal region) (By similarity). Interacts with NEK6, DAPK2 (isoform 2) and ZIPK/DAPK3 (By similarity). Interacts (via its leucine zipper domain) with GABBR1 and GABBR2 (via their C-termini) (By similarity). Forms a heterodimer with TXLNG in osteoblasts (PubMed:15911876). Interacts (via its DNA binding domain) with FOXO1 (C-terminal half); the interaction occurs in osteoblasts and regulates glucose homeostasis through suppression of beta-cell proliferation and a decrease in insulin production (PubMed:22298775). Interacts with SATB2; the interaction results in enhanced DNA binding and transactivation by these transcription factors (PubMed:16751105). Interacts with ABRAXAS2 (PubMed:22974638). Interacts with TRIB3, inhibiting the transactivation activity of ATF4 (PubMed:17369260). Interacts with DISC1; which inhibits ATF4 transcription factor activity by disrupting ATF4 dimerization and DNA-binding (PubMed:31444471). Interacts with EP300/p300; EP300/p300 stabilizes ATF4 and increases its transcriptional activity independently of its catalytic activity by preventing its ubiquitination (By similarity).</text>
</comment>
<comment type="interaction">
    <interactant intactId="EBI-77383">
        <id>Q06507</id>
    </interactant>
    <interactant intactId="EBI-77359">
        <id>O54784</id>
        <label>Dapk3</label>
    </interactant>
    <organismsDiffer>false</organismsDiffer>
    <experiments>3</experiments>
</comment>
<comment type="interaction">
    <interactant intactId="EBI-77383">
        <id>Q06507</id>
    </interactant>
    <interactant intactId="EBI-10636142">
        <id>P35639</id>
        <label>Ddit3</label>
    </interactant>
    <organismsDiffer>false</organismsDiffer>
    <experiments>3</experiments>
</comment>
<comment type="interaction">
    <interactant intactId="EBI-77383">
        <id>Q06507</id>
    </interactant>
    <interactant intactId="EBI-448962">
        <id>Q8K4K2</id>
        <label>Trib3</label>
    </interactant>
    <organismsDiffer>false</organismsDiffer>
    <experiments>3</experiments>
</comment>
<comment type="subcellular location">
    <subcellularLocation>
        <location evidence="13 19 24">Nucleus</location>
    </subcellularLocation>
    <subcellularLocation>
        <location evidence="2">Nucleus speckle</location>
    </subcellularLocation>
    <subcellularLocation>
        <location evidence="19">Cytoplasm</location>
    </subcellularLocation>
    <subcellularLocation>
        <location evidence="3">Cell membrane</location>
    </subcellularLocation>
    <subcellularLocation>
        <location evidence="2">Cytoplasm</location>
        <location evidence="2">Cytoskeleton</location>
        <location evidence="2">Microtubule organizing center</location>
        <location evidence="2">Centrosome</location>
    </subcellularLocation>
    <text evidence="2 3">Colocalizes with GABBR1 in hippocampal neuron dendritic membranes. Colocalizes with NEK6 in the centrosome (By similarity). Recruited to nuclear speckles following interaction with EP300/p300 (By similarity).</text>
</comment>
<comment type="tissue specificity">
    <text evidence="36">Ubiquitously expressed in adults.</text>
</comment>
<comment type="developmental stage">
    <text evidence="7 19">During embryonic development, expressed at high levels in anterior epithelial lens cells at 14.5 dpc (PubMed:10885750). At 16.5 dpc, expressed in osteoblasts surrounding newly formed trabecular bone (PubMed:19232401). At postnatal day 2, detected in most osteoblasts and lining cells (PubMed:19232401). By postnatal week 4, is detected in fewer osteoblasts, but remains present in lining cells (at protein level) (PubMed:19232401).</text>
</comment>
<comment type="induction">
    <text evidence="9 11 14 20 21 23 28">Regulated at the translational level in response to various stress such as endoplasmic reticulum stress, amino acid starvation or oxidative stress (PubMed:11106749, PubMed:12667446, PubMed:15277680, PubMed:21159964, PubMed:31023583). In the absence of stress, ribosomes re-initiate translation at an inhibitory open reading frame (uORF) upstream of the ATF4 transcript, which precludes AFT4 translation (PubMed:11106749, PubMed:15277680). In response to stress and subsequent EIF2S1/eIF-2-alpha phosphorylation, ribosomes bypass the inhibitory uORF and re-initiate translation at the AFT4 coding sequence (PubMed:15277680). Expressed in a circadian manner in the midbrain with an increased expression seen during the dark phase (at protein level) (PubMed:21768648, PubMed:22572884). Expressed in a circadian manner also in the suprachiasmatic nucleus (SCN) of the brain, cerebral cortex, kidney and small intestine (PubMed:21768648, PubMed:22572884).</text>
</comment>
<comment type="domain">
    <text evidence="26">The BetaTrCP degron motif promotes binding to BTRC when phosphorylated.</text>
</comment>
<comment type="PTM">
    <text evidence="2 26">Ubiquitinated by SCF(BTRC) in response to mTORC1 signal, followed by proteasomal degradation and leading to down-regulate expression of SIRT4 (PubMed:23663782). Interaction with EP300/p300 inhibits ubiquitination by SCF(BTRC) (By similarity).</text>
</comment>
<comment type="PTM">
    <text evidence="2 13 26">Phosphorylation at Ser-251 by RPS6KA3/RSK2 in osteoblasts enhances transactivation activity and promotes osteoblast differentiation (PubMed:15109498). Phosphorylated on the betaTrCP degron motif at Ser-218, followed by phosphorylation at Thr-212, Ser-223, Ser-230, Ser-234 and Ser-247, promoting interaction with BTRC and ubiquitination (PubMed:23663782). Phosphorylation is promoted by mTORC1 (PubMed:23663782). Phosphorylation at Ser-214 by CK2 decreases its stability (By similarity). Phosphorylated by NEK6 (By similarity).</text>
</comment>
<comment type="PTM">
    <text evidence="27">Hydroxylated by PHD3, leading to decreased protein stability.</text>
</comment>
<comment type="disruption phenotype">
    <text evidence="6 7 10 13 22">Mice were born at a much lower rate than predicted by the Mendelian ratio (PubMed:10096021, PubMed:10885750). Homozygous pups generally die during the first hour after birth, although excess mortality occurs throughout the first 3 weeks of life (PubMed:10096021, PubMed:11806972). Embryos are severely anemic during fetal development, due to an impairment in definitive hematopoiesis (PubMed:11806972). Surviving mice display defects in embryonic lens formation leading to severe microphthalmia in adults (PubMed:10096021, PubMed:10885750). Embryos show delayed bone formation and surviving mice display low bone mass throughout postnatal life (PubMed:15109498). Surviving null mice exhibit an increase in serum insulin levels and low blood glucose levels (PubMed:22298775). There is a decrease in total fat content, gonadal fat, lean mass and body weight (PubMed:22298775). Serum levels of osteocalcin/BGLAP are decreased (PubMed:22298775). PBK/AKT1-mediated phosphorylation of FOXO1 at 'Ser-258' is increased with a subsequent decrease of FOXO1-mediated transcriptional activity (PubMed:22298775).</text>
</comment>
<comment type="similarity">
    <text evidence="35">Belongs to the bZIP family.</text>
</comment>
<comment type="sequence caution" evidence="35">
    <conflict type="erroneous initiation">
        <sequence resource="EMBL-CDS" id="AAA53043"/>
    </conflict>
    <text>Truncated N-terminus.</text>
</comment>
<feature type="chain" id="PRO_0000076585" description="Cyclic AMP-dependent transcription factor ATF-4">
    <location>
        <begin position="1"/>
        <end position="349"/>
    </location>
</feature>
<feature type="domain" description="bZIP" evidence="4">
    <location>
        <begin position="276"/>
        <end position="339"/>
    </location>
</feature>
<feature type="region of interest" description="Disordered" evidence="5">
    <location>
        <begin position="49"/>
        <end position="75"/>
    </location>
</feature>
<feature type="region of interest" description="Disordered" evidence="5">
    <location>
        <begin position="204"/>
        <end position="271"/>
    </location>
</feature>
<feature type="region of interest" description="Basic motif" evidence="4">
    <location>
        <begin position="278"/>
        <end position="298"/>
    </location>
</feature>
<feature type="region of interest" description="Disordered" evidence="5">
    <location>
        <begin position="279"/>
        <end position="298"/>
    </location>
</feature>
<feature type="region of interest" description="Interaction with GABBR1" evidence="1">
    <location>
        <begin position="303"/>
        <end position="339"/>
    </location>
</feature>
<feature type="region of interest" description="Leucine-zipper" evidence="4">
    <location>
        <begin position="304"/>
        <end position="332"/>
    </location>
</feature>
<feature type="short sequence motif" description="BetaTrCP degron motif" evidence="26">
    <location>
        <begin position="214"/>
        <end position="223"/>
    </location>
</feature>
<feature type="compositionally biased region" description="Polar residues" evidence="5">
    <location>
        <begin position="229"/>
        <end position="239"/>
    </location>
</feature>
<feature type="modified residue" description="4-hydroxyproline" evidence="27">
    <location>
        <position position="60"/>
    </location>
</feature>
<feature type="modified residue" description="Phosphothreonine" evidence="26">
    <location>
        <position position="212"/>
    </location>
</feature>
<feature type="modified residue" description="Phosphoserine" evidence="2">
    <location>
        <position position="214"/>
    </location>
</feature>
<feature type="modified residue" description="Phosphoserine" evidence="26">
    <location>
        <position position="218"/>
    </location>
</feature>
<feature type="modified residue" description="Phosphoserine" evidence="26">
    <location>
        <position position="223"/>
    </location>
</feature>
<feature type="modified residue" description="Phosphoserine" evidence="26">
    <location>
        <position position="230"/>
    </location>
</feature>
<feature type="modified residue" description="Phosphoserine" evidence="26">
    <location>
        <position position="234"/>
    </location>
</feature>
<feature type="modified residue" description="4-hydroxyproline" evidence="27">
    <location>
        <position position="235"/>
    </location>
</feature>
<feature type="modified residue" description="Phosphoserine" evidence="26">
    <location>
        <position position="247"/>
    </location>
</feature>
<feature type="modified residue" description="Phosphoserine; by RPS6KA3" evidence="13">
    <location>
        <position position="251"/>
    </location>
</feature>
<feature type="modified residue" description="N6-acetyllysine" evidence="2">
    <location>
        <position position="309"/>
    </location>
</feature>
<feature type="cross-link" description="Glycyl lysine isopeptide (Lys-Gly) (interchain with G-Cter in SUMO2)" evidence="2">
    <location>
        <position position="258"/>
    </location>
</feature>
<feature type="cross-link" description="Glycyl lysine isopeptide (Lys-Gly) (interchain with G-Cter in SUMO2)" evidence="2">
    <location>
        <position position="270"/>
    </location>
</feature>
<feature type="mutagenesis site" description="Promotes stabilization due to impaired ubiquitination; when associated with A-223; A-230; A-234 and A-247." evidence="26">
    <original>T</original>
    <variation>A</variation>
    <location>
        <position position="212"/>
    </location>
</feature>
<feature type="mutagenesis site" description="Promotes stabilization due to impaired ubiquitination." evidence="26">
    <original>S</original>
    <variation>A</variation>
    <location>
        <position position="218"/>
    </location>
</feature>
<feature type="mutagenesis site" description="Promotes stabilization due to impaired ubiquitination; when associated with A-212; A-230; A-234 and A-247." evidence="26">
    <original>S</original>
    <variation>A</variation>
    <location>
        <position position="223"/>
    </location>
</feature>
<feature type="mutagenesis site" description="Promotes stabilization due to impaired ubiquitination; when associated with A-212; A-223; A-234 and A-247." evidence="26">
    <original>S</original>
    <variation>A</variation>
    <location>
        <position position="230"/>
    </location>
</feature>
<feature type="mutagenesis site" description="Promotes stabilization due to impaired ubiquitination; when associated with A-212; A-223; A-230 and A-247." evidence="26">
    <original>S</original>
    <variation>A</variation>
    <location>
        <position position="234"/>
    </location>
</feature>
<feature type="mutagenesis site" description="Promotes stabilization due to impaired ubiquitination; when associated with A-212; A-223; A-230 and A-234. Does not affect phosphorylation by RPS6KA3/RSK2." evidence="13 26">
    <original>S</original>
    <variation>A</variation>
    <location>
        <position position="247"/>
    </location>
</feature>
<feature type="mutagenesis site" description="Abolished phosphorylation by RPS6KA3/RSK2." evidence="13">
    <original>S</original>
    <variation>A</variation>
    <variation>R</variation>
    <variation>D</variation>
    <location>
        <position position="251"/>
    </location>
</feature>
<feature type="mutagenesis site" description="Does not affect phosphorylation by RPS6KA3/RSK2." evidence="13">
    <original>S</original>
    <variation>A</variation>
    <location>
        <position position="254"/>
    </location>
</feature>
<feature type="sequence conflict" description="In Ref. 1; AAA40476." evidence="35" ref="1">
    <original>K</original>
    <variation>Q</variation>
    <location>
        <position position="345"/>
    </location>
</feature>
<feature type="helix" evidence="39">
    <location>
        <begin position="317"/>
        <end position="342"/>
    </location>
</feature>
<reference key="1">
    <citation type="journal article" date="1993" name="Proc. Natl. Acad. Sci. U.S.A.">
        <title>C/ATF, a member of the activating transcription factor family of DNA-binding proteins, dimerizes with CAAT/enhancer-binding proteins and directs their binding to cAMP response elements.</title>
        <authorList>
            <person name="Vallejo M."/>
            <person name="Ron D."/>
            <person name="Miller C.P."/>
            <person name="Habener J.F."/>
        </authorList>
    </citation>
    <scope>NUCLEOTIDE SEQUENCE [MRNA]</scope>
    <scope>FUNCTION</scope>
    <scope>SUBUNIT</scope>
    <scope>SUBCELLULAR LOCATION</scope>
    <source>
        <tissue>Adipocyte</tissue>
    </source>
</reference>
<reference key="2">
    <citation type="journal article" date="1992" name="Proc. Natl. Acad. Sci. U.S.A.">
        <title>Protein interaction cloning in yeast: identification of mammalian proteins that react with the leucine zipper of Jun.</title>
        <authorList>
            <person name="Chevray P.M."/>
            <person name="Nathans D."/>
        </authorList>
    </citation>
    <scope>NUCLEOTIDE SEQUENCE [MRNA]</scope>
    <source>
        <strain>CD-1</strain>
        <tissue>Embryo</tissue>
    </source>
</reference>
<reference key="3">
    <citation type="journal article" date="2005" name="Science">
        <title>The transcriptional landscape of the mammalian genome.</title>
        <authorList>
            <person name="Carninci P."/>
            <person name="Kasukawa T."/>
            <person name="Katayama S."/>
            <person name="Gough J."/>
            <person name="Frith M.C."/>
            <person name="Maeda N."/>
            <person name="Oyama R."/>
            <person name="Ravasi T."/>
            <person name="Lenhard B."/>
            <person name="Wells C."/>
            <person name="Kodzius R."/>
            <person name="Shimokawa K."/>
            <person name="Bajic V.B."/>
            <person name="Brenner S.E."/>
            <person name="Batalov S."/>
            <person name="Forrest A.R."/>
            <person name="Zavolan M."/>
            <person name="Davis M.J."/>
            <person name="Wilming L.G."/>
            <person name="Aidinis V."/>
            <person name="Allen J.E."/>
            <person name="Ambesi-Impiombato A."/>
            <person name="Apweiler R."/>
            <person name="Aturaliya R.N."/>
            <person name="Bailey T.L."/>
            <person name="Bansal M."/>
            <person name="Baxter L."/>
            <person name="Beisel K.W."/>
            <person name="Bersano T."/>
            <person name="Bono H."/>
            <person name="Chalk A.M."/>
            <person name="Chiu K.P."/>
            <person name="Choudhary V."/>
            <person name="Christoffels A."/>
            <person name="Clutterbuck D.R."/>
            <person name="Crowe M.L."/>
            <person name="Dalla E."/>
            <person name="Dalrymple B.P."/>
            <person name="de Bono B."/>
            <person name="Della Gatta G."/>
            <person name="di Bernardo D."/>
            <person name="Down T."/>
            <person name="Engstrom P."/>
            <person name="Fagiolini M."/>
            <person name="Faulkner G."/>
            <person name="Fletcher C.F."/>
            <person name="Fukushima T."/>
            <person name="Furuno M."/>
            <person name="Futaki S."/>
            <person name="Gariboldi M."/>
            <person name="Georgii-Hemming P."/>
            <person name="Gingeras T.R."/>
            <person name="Gojobori T."/>
            <person name="Green R.E."/>
            <person name="Gustincich S."/>
            <person name="Harbers M."/>
            <person name="Hayashi Y."/>
            <person name="Hensch T.K."/>
            <person name="Hirokawa N."/>
            <person name="Hill D."/>
            <person name="Huminiecki L."/>
            <person name="Iacono M."/>
            <person name="Ikeo K."/>
            <person name="Iwama A."/>
            <person name="Ishikawa T."/>
            <person name="Jakt M."/>
            <person name="Kanapin A."/>
            <person name="Katoh M."/>
            <person name="Kawasawa Y."/>
            <person name="Kelso J."/>
            <person name="Kitamura H."/>
            <person name="Kitano H."/>
            <person name="Kollias G."/>
            <person name="Krishnan S.P."/>
            <person name="Kruger A."/>
            <person name="Kummerfeld S.K."/>
            <person name="Kurochkin I.V."/>
            <person name="Lareau L.F."/>
            <person name="Lazarevic D."/>
            <person name="Lipovich L."/>
            <person name="Liu J."/>
            <person name="Liuni S."/>
            <person name="McWilliam S."/>
            <person name="Madan Babu M."/>
            <person name="Madera M."/>
            <person name="Marchionni L."/>
            <person name="Matsuda H."/>
            <person name="Matsuzawa S."/>
            <person name="Miki H."/>
            <person name="Mignone F."/>
            <person name="Miyake S."/>
            <person name="Morris K."/>
            <person name="Mottagui-Tabar S."/>
            <person name="Mulder N."/>
            <person name="Nakano N."/>
            <person name="Nakauchi H."/>
            <person name="Ng P."/>
            <person name="Nilsson R."/>
            <person name="Nishiguchi S."/>
            <person name="Nishikawa S."/>
            <person name="Nori F."/>
            <person name="Ohara O."/>
            <person name="Okazaki Y."/>
            <person name="Orlando V."/>
            <person name="Pang K.C."/>
            <person name="Pavan W.J."/>
            <person name="Pavesi G."/>
            <person name="Pesole G."/>
            <person name="Petrovsky N."/>
            <person name="Piazza S."/>
            <person name="Reed J."/>
            <person name="Reid J.F."/>
            <person name="Ring B.Z."/>
            <person name="Ringwald M."/>
            <person name="Rost B."/>
            <person name="Ruan Y."/>
            <person name="Salzberg S.L."/>
            <person name="Sandelin A."/>
            <person name="Schneider C."/>
            <person name="Schoenbach C."/>
            <person name="Sekiguchi K."/>
            <person name="Semple C.A."/>
            <person name="Seno S."/>
            <person name="Sessa L."/>
            <person name="Sheng Y."/>
            <person name="Shibata Y."/>
            <person name="Shimada H."/>
            <person name="Shimada K."/>
            <person name="Silva D."/>
            <person name="Sinclair B."/>
            <person name="Sperling S."/>
            <person name="Stupka E."/>
            <person name="Sugiura K."/>
            <person name="Sultana R."/>
            <person name="Takenaka Y."/>
            <person name="Taki K."/>
            <person name="Tammoja K."/>
            <person name="Tan S.L."/>
            <person name="Tang S."/>
            <person name="Taylor M.S."/>
            <person name="Tegner J."/>
            <person name="Teichmann S.A."/>
            <person name="Ueda H.R."/>
            <person name="van Nimwegen E."/>
            <person name="Verardo R."/>
            <person name="Wei C.L."/>
            <person name="Yagi K."/>
            <person name="Yamanishi H."/>
            <person name="Zabarovsky E."/>
            <person name="Zhu S."/>
            <person name="Zimmer A."/>
            <person name="Hide W."/>
            <person name="Bult C."/>
            <person name="Grimmond S.M."/>
            <person name="Teasdale R.D."/>
            <person name="Liu E.T."/>
            <person name="Brusic V."/>
            <person name="Quackenbush J."/>
            <person name="Wahlestedt C."/>
            <person name="Mattick J.S."/>
            <person name="Hume D.A."/>
            <person name="Kai C."/>
            <person name="Sasaki D."/>
            <person name="Tomaru Y."/>
            <person name="Fukuda S."/>
            <person name="Kanamori-Katayama M."/>
            <person name="Suzuki M."/>
            <person name="Aoki J."/>
            <person name="Arakawa T."/>
            <person name="Iida J."/>
            <person name="Imamura K."/>
            <person name="Itoh M."/>
            <person name="Kato T."/>
            <person name="Kawaji H."/>
            <person name="Kawagashira N."/>
            <person name="Kawashima T."/>
            <person name="Kojima M."/>
            <person name="Kondo S."/>
            <person name="Konno H."/>
            <person name="Nakano K."/>
            <person name="Ninomiya N."/>
            <person name="Nishio T."/>
            <person name="Okada M."/>
            <person name="Plessy C."/>
            <person name="Shibata K."/>
            <person name="Shiraki T."/>
            <person name="Suzuki S."/>
            <person name="Tagami M."/>
            <person name="Waki K."/>
            <person name="Watahiki A."/>
            <person name="Okamura-Oho Y."/>
            <person name="Suzuki H."/>
            <person name="Kawai J."/>
            <person name="Hayashizaki Y."/>
        </authorList>
    </citation>
    <scope>NUCLEOTIDE SEQUENCE [LARGE SCALE MRNA]</scope>
    <source>
        <strain>BALB/cJ</strain>
        <strain>C57BL/6J</strain>
        <strain>NOD</strain>
        <tissue>Lung</tissue>
        <tissue>Spinal cord</tissue>
        <tissue>Spleen</tissue>
    </source>
</reference>
<reference key="4">
    <citation type="submission" date="2005-09" db="EMBL/GenBank/DDBJ databases">
        <authorList>
            <person name="Mural R.J."/>
            <person name="Adams M.D."/>
            <person name="Myers E.W."/>
            <person name="Smith H.O."/>
            <person name="Venter J.C."/>
        </authorList>
    </citation>
    <scope>NUCLEOTIDE SEQUENCE [LARGE SCALE GENOMIC DNA]</scope>
</reference>
<reference key="5">
    <citation type="journal article" date="2004" name="Genome Res.">
        <title>The status, quality, and expansion of the NIH full-length cDNA project: the Mammalian Gene Collection (MGC).</title>
        <authorList>
            <consortium name="The MGC Project Team"/>
        </authorList>
    </citation>
    <scope>NUCLEOTIDE SEQUENCE [LARGE SCALE MRNA]</scope>
    <source>
        <strain>C57BL/6J</strain>
        <tissue>Eye</tissue>
    </source>
</reference>
<reference key="6">
    <citation type="journal article" date="1998" name="Genes Cells">
        <title>Targeted disruption of ATF4 discloses its essential role in the formation of eye lens fibres.</title>
        <authorList>
            <person name="Tanaka T."/>
            <person name="Tsujimura T."/>
            <person name="Takeda K."/>
            <person name="Sugihara A."/>
            <person name="Maekawa A."/>
            <person name="Terada N."/>
            <person name="Yoshida N."/>
            <person name="Akira S."/>
        </authorList>
    </citation>
    <scope>FUNCTION</scope>
    <scope>DISRUPTION PHENOTYPE</scope>
</reference>
<reference key="7">
    <citation type="journal article" date="2000" name="Dev. Biol.">
        <title>Microphthalmia due to p53-mediated apoptosis of anterior lens epithelial cells in mice lacking the CREB-2 transcription factor.</title>
        <authorList>
            <person name="Hettmann T."/>
            <person name="Barton K."/>
            <person name="Leiden J.M."/>
        </authorList>
    </citation>
    <scope>FUNCTION</scope>
    <scope>TISSUE SPECIFICITY</scope>
    <scope>DEVELOPMENTAL STAGE</scope>
    <scope>DISRUPTION PHENOTYPE</scope>
</reference>
<reference key="8">
    <citation type="journal article" date="2000" name="Mol. Cell">
        <title>Regulated translation initiation controls stress-induced gene expression in mammalian cells.</title>
        <authorList>
            <person name="Harding H.P."/>
            <person name="Novoa I."/>
            <person name="Zhang Y."/>
            <person name="Zeng H."/>
            <person name="Wek R."/>
            <person name="Schapira M."/>
            <person name="Ron D."/>
        </authorList>
    </citation>
    <scope>FUNCTION</scope>
    <scope>INDUCTION</scope>
</reference>
<reference key="9">
    <citation type="journal article" date="2001" name="J. Biol. Chem.">
        <title>Crystal structure of the CCAAT box/enhancer-binding protein beta activating transcription factor-4 basic leucine zipper heterodimer in the absence of DNA.</title>
        <authorList>
            <person name="Podust L.M."/>
            <person name="Krezel A.M."/>
            <person name="Kim Y."/>
        </authorList>
    </citation>
    <scope>INTERACTION WITH CEBPB</scope>
    <scope>DNA-BINDING</scope>
</reference>
<reference key="10">
    <citation type="journal article" date="2002" name="Blood">
        <title>Targeted disruption of the activating transcription factor 4 gene results in severe fetal anemia in mice.</title>
        <authorList>
            <person name="Masuoka H.C."/>
            <person name="Townes T.M."/>
        </authorList>
    </citation>
    <scope>FUNCTION</scope>
    <scope>DISRUPTION PHENOTYPE</scope>
</reference>
<reference key="11">
    <citation type="journal article" date="2003" name="Mol. Cell">
        <title>An integrated stress response regulates amino acid metabolism and resistance to oxidative stress.</title>
        <authorList>
            <person name="Harding H.P."/>
            <person name="Zhang Y."/>
            <person name="Zeng H."/>
            <person name="Novoa I."/>
            <person name="Lu P.D."/>
            <person name="Calfon M."/>
            <person name="Sadri N."/>
            <person name="Yun C."/>
            <person name="Popko B."/>
            <person name="Paules R."/>
            <person name="Stojdl D.F."/>
            <person name="Bell J.C."/>
            <person name="Hettmann T."/>
            <person name="Leiden J.M."/>
            <person name="Ron D."/>
        </authorList>
    </citation>
    <scope>FUNCTION</scope>
    <scope>INDUCTION</scope>
</reference>
<reference key="12">
    <citation type="journal article" date="2003" name="Neuron">
        <title>Inducible enhancement of memory storage and synaptic plasticity in transgenic mice expressing an inhibitor of ATF4 (CREB-2) and C/EBP proteins.</title>
        <authorList>
            <person name="Chen A."/>
            <person name="Muzzio I.A."/>
            <person name="Malleret G."/>
            <person name="Bartsch D."/>
            <person name="Verbitsky M."/>
            <person name="Pavlidis P."/>
            <person name="Yonan A.L."/>
            <person name="Vronskaya S."/>
            <person name="Grody M.B."/>
            <person name="Cepeda I."/>
            <person name="Gilliam T.C."/>
            <person name="Kandel E.R."/>
        </authorList>
    </citation>
    <scope>FUNCTION</scope>
</reference>
<reference key="13">
    <citation type="journal article" date="2004" name="Cell">
        <title>ATF4 is a substrate of RSK2 and an essential regulator of osteoblast biology; implication for Coffin-Lowry Syndrome.</title>
        <authorList>
            <person name="Yang X."/>
            <person name="Matsuda K."/>
            <person name="Bialek P."/>
            <person name="Jacquot S."/>
            <person name="Masuoka H.C."/>
            <person name="Schinke T."/>
            <person name="Li L."/>
            <person name="Brancorsini S."/>
            <person name="Sassone-Corsi P."/>
            <person name="Townes T.M."/>
            <person name="Hanauer A."/>
            <person name="Karsenty G."/>
        </authorList>
    </citation>
    <scope>FUNCTION</scope>
    <scope>SUBCELLULAR LOCATION</scope>
    <scope>DISRUPTION PHENOTYPE</scope>
    <scope>PHOSPHORYLATION AT SER-251</scope>
    <scope>MUTAGENESIS OF SER-247; SER-251 AND SER-254</scope>
</reference>
<reference key="14">
    <citation type="journal article" date="2004" name="Proc. Natl. Acad. Sci. U.S.A.">
        <title>Reinitiation involving upstream ORFs regulates ATF4 mRNA translation in mammalian cells.</title>
        <authorList>
            <person name="Vattem K.M."/>
            <person name="Wek R.C."/>
        </authorList>
    </citation>
    <scope>INDUCTION</scope>
</reference>
<reference key="15">
    <citation type="journal article" date="2005" name="EMBO J.">
        <title>TRB3, a novel ER stress-inducible gene, is induced via ATF4-CHOP pathway and is involved in cell death.</title>
        <authorList>
            <person name="Ohoka N."/>
            <person name="Yoshii S."/>
            <person name="Hattori T."/>
            <person name="Onozaki K."/>
            <person name="Hayashi H."/>
        </authorList>
    </citation>
    <scope>FUNCTION</scope>
</reference>
<reference key="16">
    <citation type="journal article" date="2005" name="J. Cell Biol.">
        <title>FIAT represses ATF4-mediated transcription to regulate bone mass in transgenic mice.</title>
        <authorList>
            <person name="Yu V.W."/>
            <person name="Ambartsoumian G."/>
            <person name="Verlinden L."/>
            <person name="Moir J.M."/>
            <person name="Prud'homme J."/>
            <person name="Gauthier C."/>
            <person name="Roughley P.J."/>
            <person name="St-Arnaud R."/>
        </authorList>
    </citation>
    <scope>INTERACTION WITH TXLNG</scope>
</reference>
<reference key="17">
    <citation type="journal article" date="2006" name="Cell">
        <title>SATB2 is a multifunctional determinant of craniofacial patterning and osteoblast differentiation.</title>
        <authorList>
            <person name="Dobreva G."/>
            <person name="Chahrour M."/>
            <person name="Dautzenberg M."/>
            <person name="Chirivella L."/>
            <person name="Kanzler B."/>
            <person name="Farinas I."/>
            <person name="Karsenty G."/>
            <person name="Grosschedl R."/>
        </authorList>
    </citation>
    <scope>INTERACTION WITH SATB2</scope>
</reference>
<reference key="18">
    <citation type="journal article" date="2007" name="J. Biol. Chem.">
        <title>TRB3 inhibits the transcriptional activation of stress-regulated genes by a negative feedback on the ATF4 pathway.</title>
        <authorList>
            <person name="Jousse C."/>
            <person name="Deval C."/>
            <person name="Maurin A.C."/>
            <person name="Parry L."/>
            <person name="Cherasse Y."/>
            <person name="Chaveroux C."/>
            <person name="Lefloch R."/>
            <person name="Lenormand P."/>
            <person name="Bruhat A."/>
            <person name="Fafournoux P."/>
        </authorList>
    </citation>
    <scope>FUNCTION</scope>
    <scope>INTERACTION WITH TRIB3</scope>
</reference>
<reference key="19">
    <citation type="journal article" date="2009" name="Gene Expr. Patterns">
        <title>FIAT is co-expressed with its dimerization target ATF4 in early osteoblasts, but not in osteocytes.</title>
        <authorList>
            <person name="Yu V.W."/>
            <person name="Akhouayri O."/>
            <person name="St-Arnaud R."/>
        </authorList>
    </citation>
    <scope>DEVELOPMENTAL STAGE</scope>
    <scope>SUBCELLULAR LOCATION</scope>
</reference>
<reference key="20">
    <citation type="journal article" date="2010" name="J. Neurosci.">
        <title>Neuronal apoptosis induced by endoplasmic reticulum stress is regulated by ATF4-CHOP-mediated induction of the Bcl-2 homology 3-only member PUMA.</title>
        <authorList>
            <person name="Galehdar Z."/>
            <person name="Swan P."/>
            <person name="Fuerth B."/>
            <person name="Callaghan S.M."/>
            <person name="Park D.S."/>
            <person name="Cregan S.P."/>
        </authorList>
    </citation>
    <scope>FUNCTION</scope>
    <scope>INDUCTION</scope>
</reference>
<reference key="21">
    <citation type="journal article" date="2011" name="J. Biol. Chem.">
        <title>cAMP-response element (CRE)-mediated transcription by activating transcription factor-4 (ATF4) is essential for circadian expression of the Period2 gene.</title>
        <authorList>
            <person name="Koyanagi S."/>
            <person name="Hamdan A.M."/>
            <person name="Horiguchi M."/>
            <person name="Kusunose N."/>
            <person name="Okamoto A."/>
            <person name="Matsunaga N."/>
            <person name="Ohdo S."/>
        </authorList>
    </citation>
    <scope>FUNCTION</scope>
    <scope>INDUCTION</scope>
</reference>
<reference key="22">
    <citation type="journal article" date="2012" name="Biochim. Biophys. Acta">
        <title>ATF4 interacts with Abro1/KIAA0157 scaffold protein and participates in a cytoprotective pathway.</title>
        <authorList>
            <person name="Ambivero C.T."/>
            <person name="Cilenti L."/>
            <person name="Zervos A.S."/>
        </authorList>
    </citation>
    <scope>INTERACTION WITH ABRAXAS2</scope>
    <scope>SUBCELLULAR LOCATION</scope>
</reference>
<reference key="23">
    <citation type="journal article" date="2012" name="J. Biol. Chem.">
        <title>FoxO1 protein cooperates with ATF4 protein in osteoblasts to control glucose homeostasis.</title>
        <authorList>
            <person name="Kode A."/>
            <person name="Mosialou I."/>
            <person name="Silva B.C."/>
            <person name="Joshi S."/>
            <person name="Ferron M."/>
            <person name="Rached M.T."/>
            <person name="Kousteni S."/>
        </authorList>
    </citation>
    <scope>DISRUPTION PHENOTYPE</scope>
    <scope>SUBCELLULAR LOCATION</scope>
    <scope>INTERACTION WITH FOXO1</scope>
    <scope>FUNCTION</scope>
</reference>
<reference key="24">
    <citation type="journal article" date="2012" name="Mol. Pharmacol.">
        <title>Role of activating transcription factor-4 in 24-hour rhythm of serotonin transporter expression in the mouse midbrain.</title>
        <authorList>
            <person name="Ushijima K."/>
            <person name="Koyanagi S."/>
            <person name="Sato Y."/>
            <person name="Ogata T."/>
            <person name="Matsunaga N."/>
            <person name="Fujimura A."/>
            <person name="Ohdo S."/>
        </authorList>
    </citation>
    <scope>FUNCTION</scope>
    <scope>INDUCTION</scope>
</reference>
<reference key="25">
    <citation type="journal article" date="2013" name="Cell">
        <title>The mTORC1 pathway stimulates glutamine metabolism and cell proliferation by repressing SIRT4.</title>
        <authorList>
            <person name="Csibi A."/>
            <person name="Fendt S.M."/>
            <person name="Li C."/>
            <person name="Poulogiannis G."/>
            <person name="Choo A.Y."/>
            <person name="Chapski D.J."/>
            <person name="Jeong S.M."/>
            <person name="Dempsey J.M."/>
            <person name="Parkhitko A."/>
            <person name="Morrison T."/>
            <person name="Henske E.P."/>
            <person name="Haigis M.C."/>
            <person name="Cantley L.C."/>
            <person name="Stephanopoulos G."/>
            <person name="Yu J."/>
            <person name="Blenis J."/>
        </authorList>
    </citation>
    <scope>FUNCTION</scope>
    <scope>UBIQUITINATION</scope>
    <scope>PHOSPHORYLATION AT THR-212; SER-218; SER-223; SER-230; SER-234 AND SER-247</scope>
    <scope>MUTAGENESIS OF THR-212; SER-218; SER-223; SER-230; SER-234 AND SER-247</scope>
</reference>
<reference key="26">
    <citation type="journal article" date="2013" name="Nat. Cell Biol.">
        <title>ER-stress-induced transcriptional regulation increases protein synthesis leading to cell death.</title>
        <authorList>
            <person name="Han J."/>
            <person name="Back S.H."/>
            <person name="Hur J."/>
            <person name="Lin Y.H."/>
            <person name="Gildersleeve R."/>
            <person name="Shan J."/>
            <person name="Yuan C.L."/>
            <person name="Krokowski D."/>
            <person name="Wang S."/>
            <person name="Hatzoglou M."/>
            <person name="Kilberg M.S."/>
            <person name="Sartor M.A."/>
            <person name="Kaufman R.J."/>
        </authorList>
    </citation>
    <scope>FUNCTION</scope>
    <scope>DNA-BINDING</scope>
    <scope>INTERACTION WITH DDIT3</scope>
</reference>
<reference key="27">
    <citation type="journal article" date="2014" name="PLoS Genet.">
        <title>Fine tuning of the UPR by the ubiquitin ligases Siah1/2.</title>
        <authorList>
            <person name="Scortegagna M."/>
            <person name="Kim H."/>
            <person name="Li J.L."/>
            <person name="Yao H."/>
            <person name="Brill L.M."/>
            <person name="Han J."/>
            <person name="Lau E."/>
            <person name="Bowtell D."/>
            <person name="Haddad G."/>
            <person name="Kaufman R.J."/>
            <person name="Ronai Z.A."/>
        </authorList>
    </citation>
    <scope>HYDROXYLATION AT PRO-60 AND PRO-235</scope>
</reference>
<reference key="28">
    <citation type="journal article" date="2019" name="Mol. Cell">
        <title>ER and nutrient stress promote assembly of respiratory chain supercomplexes through the PERK-eIF2alpha axis.</title>
        <authorList>
            <person name="Balsa E."/>
            <person name="Soustek M.S."/>
            <person name="Thomas A."/>
            <person name="Cogliati S."/>
            <person name="Garcia-Poyatos C."/>
            <person name="Martin-Garcia E."/>
            <person name="Jedrychowski M."/>
            <person name="Gygi S.P."/>
            <person name="Enriquez J.A."/>
            <person name="Puigserver P."/>
        </authorList>
    </citation>
    <scope>FUNCTION</scope>
    <scope>INDUCTION</scope>
</reference>
<reference evidence="38" key="29">
    <citation type="journal article" date="2021" name="Mol. Psychiatry">
        <title>Structural interaction between DISC1 and ATF4 underlying transcriptional and synaptic dysregulation in an iPSC model of mental disorders.</title>
        <authorList>
            <person name="Wang X."/>
            <person name="Ye F."/>
            <person name="Wen Z."/>
            <person name="Guo Z."/>
            <person name="Yu C."/>
            <person name="Huang W.K."/>
            <person name="Rojas Ringeling F."/>
            <person name="Su Y."/>
            <person name="Zheng W."/>
            <person name="Zhou G."/>
            <person name="Christian K.M."/>
            <person name="Song H."/>
            <person name="Zhang M."/>
            <person name="Ming G.L."/>
        </authorList>
    </citation>
    <scope>STRUCTURE BY NMR OF 314-349 IN COMPLEX WITH DISC1</scope>
    <scope>INTERACTION WITH DISC1</scope>
    <scope>FUNCTION</scope>
</reference>
<evidence type="ECO:0000250" key="1"/>
<evidence type="ECO:0000250" key="2">
    <source>
        <dbReference type="UniProtKB" id="P18848"/>
    </source>
</evidence>
<evidence type="ECO:0000250" key="3">
    <source>
        <dbReference type="UniProtKB" id="Q9ES19"/>
    </source>
</evidence>
<evidence type="ECO:0000255" key="4">
    <source>
        <dbReference type="PROSITE-ProRule" id="PRU00978"/>
    </source>
</evidence>
<evidence type="ECO:0000256" key="5">
    <source>
        <dbReference type="SAM" id="MobiDB-lite"/>
    </source>
</evidence>
<evidence type="ECO:0000269" key="6">
    <source>
    </source>
</evidence>
<evidence type="ECO:0000269" key="7">
    <source>
    </source>
</evidence>
<evidence type="ECO:0000269" key="8">
    <source>
    </source>
</evidence>
<evidence type="ECO:0000269" key="9">
    <source>
    </source>
</evidence>
<evidence type="ECO:0000269" key="10">
    <source>
    </source>
</evidence>
<evidence type="ECO:0000269" key="11">
    <source>
    </source>
</evidence>
<evidence type="ECO:0000269" key="12">
    <source>
    </source>
</evidence>
<evidence type="ECO:0000269" key="13">
    <source>
    </source>
</evidence>
<evidence type="ECO:0000269" key="14">
    <source>
    </source>
</evidence>
<evidence type="ECO:0000269" key="15">
    <source>
    </source>
</evidence>
<evidence type="ECO:0000269" key="16">
    <source>
    </source>
</evidence>
<evidence type="ECO:0000269" key="17">
    <source>
    </source>
</evidence>
<evidence type="ECO:0000269" key="18">
    <source>
    </source>
</evidence>
<evidence type="ECO:0000269" key="19">
    <source>
    </source>
</evidence>
<evidence type="ECO:0000269" key="20">
    <source>
    </source>
</evidence>
<evidence type="ECO:0000269" key="21">
    <source>
    </source>
</evidence>
<evidence type="ECO:0000269" key="22">
    <source>
    </source>
</evidence>
<evidence type="ECO:0000269" key="23">
    <source>
    </source>
</evidence>
<evidence type="ECO:0000269" key="24">
    <source>
    </source>
</evidence>
<evidence type="ECO:0000269" key="25">
    <source>
    </source>
</evidence>
<evidence type="ECO:0000269" key="26">
    <source>
    </source>
</evidence>
<evidence type="ECO:0000269" key="27">
    <source>
    </source>
</evidence>
<evidence type="ECO:0000269" key="28">
    <source>
    </source>
</evidence>
<evidence type="ECO:0000269" key="29">
    <source>
    </source>
</evidence>
<evidence type="ECO:0000269" key="30">
    <source>
    </source>
</evidence>
<evidence type="ECO:0000303" key="31">
    <source>
    </source>
</evidence>
<evidence type="ECO:0000303" key="32">
    <source>
    </source>
</evidence>
<evidence type="ECO:0000303" key="33">
    <source>
    </source>
</evidence>
<evidence type="ECO:0000303" key="34">
    <source>
    </source>
</evidence>
<evidence type="ECO:0000305" key="35"/>
<evidence type="ECO:0000305" key="36">
    <source>
    </source>
</evidence>
<evidence type="ECO:0000312" key="37">
    <source>
        <dbReference type="MGI" id="MGI:88096"/>
    </source>
</evidence>
<evidence type="ECO:0007744" key="38">
    <source>
        <dbReference type="PDB" id="6IRR"/>
    </source>
</evidence>
<evidence type="ECO:0007829" key="39">
    <source>
        <dbReference type="PDB" id="6IRR"/>
    </source>
</evidence>
<proteinExistence type="evidence at protein level"/>
<dbReference type="EMBL" id="L13791">
    <property type="protein sequence ID" value="AAA40476.1"/>
    <property type="molecule type" value="mRNA"/>
</dbReference>
<dbReference type="EMBL" id="M94087">
    <property type="protein sequence ID" value="AAA53043.1"/>
    <property type="status" value="ALT_INIT"/>
    <property type="molecule type" value="mRNA"/>
</dbReference>
<dbReference type="EMBL" id="AK138657">
    <property type="protein sequence ID" value="BAE23736.1"/>
    <property type="molecule type" value="mRNA"/>
</dbReference>
<dbReference type="EMBL" id="AK144777">
    <property type="protein sequence ID" value="BAE26060.1"/>
    <property type="molecule type" value="mRNA"/>
</dbReference>
<dbReference type="EMBL" id="AK146193">
    <property type="protein sequence ID" value="BAE26967.1"/>
    <property type="molecule type" value="mRNA"/>
</dbReference>
<dbReference type="EMBL" id="AK156298">
    <property type="protein sequence ID" value="BAE33662.1"/>
    <property type="molecule type" value="mRNA"/>
</dbReference>
<dbReference type="EMBL" id="CH466550">
    <property type="protein sequence ID" value="EDL04604.1"/>
    <property type="molecule type" value="Genomic_DNA"/>
</dbReference>
<dbReference type="EMBL" id="CH466550">
    <property type="protein sequence ID" value="EDL04605.1"/>
    <property type="molecule type" value="Genomic_DNA"/>
</dbReference>
<dbReference type="EMBL" id="BC085169">
    <property type="protein sequence ID" value="AAH85169.1"/>
    <property type="molecule type" value="mRNA"/>
</dbReference>
<dbReference type="CCDS" id="CCDS37145.1"/>
<dbReference type="RefSeq" id="NP_001274109.1">
    <property type="nucleotide sequence ID" value="NM_001287180.1"/>
</dbReference>
<dbReference type="RefSeq" id="NP_033846.2">
    <property type="nucleotide sequence ID" value="NM_009716.3"/>
</dbReference>
<dbReference type="PDB" id="6IRR">
    <property type="method" value="NMR"/>
    <property type="chains" value="A=314-349"/>
</dbReference>
<dbReference type="PDBsum" id="6IRR"/>
<dbReference type="SMR" id="Q06507"/>
<dbReference type="BioGRID" id="198235">
    <property type="interactions" value="12"/>
</dbReference>
<dbReference type="ComplexPortal" id="CPX-6">
    <property type="entry name" value="bZIP transcription factor complex, Atf4-Creb1"/>
</dbReference>
<dbReference type="ComplexPortal" id="CPX-7">
    <property type="entry name" value="bZIP transcription factor complex, Atf1-Atf4"/>
</dbReference>
<dbReference type="CORUM" id="Q06507"/>
<dbReference type="DIP" id="DIP-30969N"/>
<dbReference type="FunCoup" id="Q06507">
    <property type="interactions" value="1678"/>
</dbReference>
<dbReference type="IntAct" id="Q06507">
    <property type="interactions" value="10"/>
</dbReference>
<dbReference type="STRING" id="10090.ENSMUSP00000105234"/>
<dbReference type="GlyGen" id="Q06507">
    <property type="glycosylation" value="2 sites, 1 O-linked glycan (1 site)"/>
</dbReference>
<dbReference type="iPTMnet" id="Q06507"/>
<dbReference type="PhosphoSitePlus" id="Q06507"/>
<dbReference type="PaxDb" id="10090-ENSMUSP00000105234"/>
<dbReference type="ProteomicsDB" id="265159"/>
<dbReference type="Antibodypedia" id="12687">
    <property type="antibodies" value="1128 antibodies from 46 providers"/>
</dbReference>
<dbReference type="DNASU" id="11911"/>
<dbReference type="Ensembl" id="ENSMUST00000109605.5">
    <property type="protein sequence ID" value="ENSMUSP00000105234.4"/>
    <property type="gene ID" value="ENSMUSG00000042406.9"/>
</dbReference>
<dbReference type="GeneID" id="11911"/>
<dbReference type="KEGG" id="mmu:11911"/>
<dbReference type="UCSC" id="uc007wvl.2">
    <property type="organism name" value="mouse"/>
</dbReference>
<dbReference type="AGR" id="MGI:88096"/>
<dbReference type="CTD" id="468"/>
<dbReference type="MGI" id="MGI:88096">
    <property type="gene designation" value="Atf4"/>
</dbReference>
<dbReference type="VEuPathDB" id="HostDB:ENSMUSG00000042406"/>
<dbReference type="eggNOG" id="KOG4571">
    <property type="taxonomic scope" value="Eukaryota"/>
</dbReference>
<dbReference type="GeneTree" id="ENSGT00530000063801"/>
<dbReference type="HOGENOM" id="CLU_055748_1_0_1"/>
<dbReference type="InParanoid" id="Q06507"/>
<dbReference type="OMA" id="ATIQEFH"/>
<dbReference type="OrthoDB" id="5847285at2759"/>
<dbReference type="TreeFam" id="TF316136"/>
<dbReference type="BioGRID-ORCS" id="11911">
    <property type="hits" value="20 hits in 85 CRISPR screens"/>
</dbReference>
<dbReference type="ChiTaRS" id="Atf4">
    <property type="organism name" value="mouse"/>
</dbReference>
<dbReference type="PRO" id="PR:Q06507"/>
<dbReference type="Proteomes" id="UP000000589">
    <property type="component" value="Chromosome 15"/>
</dbReference>
<dbReference type="RNAct" id="Q06507">
    <property type="molecule type" value="protein"/>
</dbReference>
<dbReference type="Bgee" id="ENSMUSG00000042406">
    <property type="expression patterns" value="Expressed in ankle joint and 288 other cell types or tissues"/>
</dbReference>
<dbReference type="ExpressionAtlas" id="Q06507">
    <property type="expression patterns" value="baseline and differential"/>
</dbReference>
<dbReference type="GO" id="GO:1990590">
    <property type="term" value="C:ATF1-ATF4 transcription factor complex"/>
    <property type="evidence" value="ECO:0000314"/>
    <property type="project" value="ParkinsonsUK-UCL"/>
</dbReference>
<dbReference type="GO" id="GO:1990589">
    <property type="term" value="C:ATF4-CREB1 transcription factor complex"/>
    <property type="evidence" value="ECO:0000314"/>
    <property type="project" value="ParkinsonsUK-UCL"/>
</dbReference>
<dbReference type="GO" id="GO:0005813">
    <property type="term" value="C:centrosome"/>
    <property type="evidence" value="ECO:0007669"/>
    <property type="project" value="UniProtKB-SubCell"/>
</dbReference>
<dbReference type="GO" id="GO:1990617">
    <property type="term" value="C:CHOP-ATF4 complex"/>
    <property type="evidence" value="ECO:0007669"/>
    <property type="project" value="Ensembl"/>
</dbReference>
<dbReference type="GO" id="GO:0005737">
    <property type="term" value="C:cytoplasm"/>
    <property type="evidence" value="ECO:0000314"/>
    <property type="project" value="UniProtKB"/>
</dbReference>
<dbReference type="GO" id="GO:0032590">
    <property type="term" value="C:dendrite membrane"/>
    <property type="evidence" value="ECO:0007669"/>
    <property type="project" value="Ensembl"/>
</dbReference>
<dbReference type="GO" id="GO:1990037">
    <property type="term" value="C:Lewy body core"/>
    <property type="evidence" value="ECO:0007669"/>
    <property type="project" value="Ensembl"/>
</dbReference>
<dbReference type="GO" id="GO:0034399">
    <property type="term" value="C:nuclear periphery"/>
    <property type="evidence" value="ECO:0007669"/>
    <property type="project" value="Ensembl"/>
</dbReference>
<dbReference type="GO" id="GO:0016607">
    <property type="term" value="C:nuclear speck"/>
    <property type="evidence" value="ECO:0007669"/>
    <property type="project" value="UniProtKB-SubCell"/>
</dbReference>
<dbReference type="GO" id="GO:0005654">
    <property type="term" value="C:nucleoplasm"/>
    <property type="evidence" value="ECO:0000304"/>
    <property type="project" value="Reactome"/>
</dbReference>
<dbReference type="GO" id="GO:0005634">
    <property type="term" value="C:nucleus"/>
    <property type="evidence" value="ECO:0000314"/>
    <property type="project" value="UniProtKB"/>
</dbReference>
<dbReference type="GO" id="GO:0032991">
    <property type="term" value="C:protein-containing complex"/>
    <property type="evidence" value="ECO:0000303"/>
    <property type="project" value="ParkinsonsUK-UCL"/>
</dbReference>
<dbReference type="GO" id="GO:0090575">
    <property type="term" value="C:RNA polymerase II transcription regulator complex"/>
    <property type="evidence" value="ECO:0000314"/>
    <property type="project" value="MGI"/>
</dbReference>
<dbReference type="GO" id="GO:0005667">
    <property type="term" value="C:transcription regulator complex"/>
    <property type="evidence" value="ECO:0000314"/>
    <property type="project" value="MGI"/>
</dbReference>
<dbReference type="GO" id="GO:0008140">
    <property type="term" value="F:cAMP response element binding protein binding"/>
    <property type="evidence" value="ECO:0000314"/>
    <property type="project" value="UniProtKB"/>
</dbReference>
<dbReference type="GO" id="GO:0003677">
    <property type="term" value="F:DNA binding"/>
    <property type="evidence" value="ECO:0000316"/>
    <property type="project" value="MGI"/>
</dbReference>
<dbReference type="GO" id="GO:0001228">
    <property type="term" value="F:DNA-binding transcription activator activity, RNA polymerase II-specific"/>
    <property type="evidence" value="ECO:0000315"/>
    <property type="project" value="NTNU_SB"/>
</dbReference>
<dbReference type="GO" id="GO:0003700">
    <property type="term" value="F:DNA-binding transcription factor activity"/>
    <property type="evidence" value="ECO:0000314"/>
    <property type="project" value="UniProtKB"/>
</dbReference>
<dbReference type="GO" id="GO:0140296">
    <property type="term" value="F:general transcription initiation factor binding"/>
    <property type="evidence" value="ECO:0007669"/>
    <property type="project" value="Ensembl"/>
</dbReference>
<dbReference type="GO" id="GO:0042802">
    <property type="term" value="F:identical protein binding"/>
    <property type="evidence" value="ECO:0007669"/>
    <property type="project" value="Ensembl"/>
</dbReference>
<dbReference type="GO" id="GO:0043522">
    <property type="term" value="F:leucine zipper domain binding"/>
    <property type="evidence" value="ECO:0007669"/>
    <property type="project" value="Ensembl"/>
</dbReference>
<dbReference type="GO" id="GO:1990841">
    <property type="term" value="F:promoter-specific chromatin binding"/>
    <property type="evidence" value="ECO:0000314"/>
    <property type="project" value="MGI"/>
</dbReference>
<dbReference type="GO" id="GO:0046982">
    <property type="term" value="F:protein heterodimerization activity"/>
    <property type="evidence" value="ECO:0000314"/>
    <property type="project" value="UniProtKB"/>
</dbReference>
<dbReference type="GO" id="GO:0019901">
    <property type="term" value="F:protein kinase binding"/>
    <property type="evidence" value="ECO:0007669"/>
    <property type="project" value="Ensembl"/>
</dbReference>
<dbReference type="GO" id="GO:0000978">
    <property type="term" value="F:RNA polymerase II cis-regulatory region sequence-specific DNA binding"/>
    <property type="evidence" value="ECO:0000314"/>
    <property type="project" value="UniProtKB"/>
</dbReference>
<dbReference type="GO" id="GO:0061629">
    <property type="term" value="F:RNA polymerase II-specific DNA-binding transcription factor binding"/>
    <property type="evidence" value="ECO:0007669"/>
    <property type="project" value="Ensembl"/>
</dbReference>
<dbReference type="GO" id="GO:0030282">
    <property type="term" value="P:bone mineralization"/>
    <property type="evidence" value="ECO:0000315"/>
    <property type="project" value="UniProtKB"/>
</dbReference>
<dbReference type="GO" id="GO:0034198">
    <property type="term" value="P:cellular response to amino acid starvation"/>
    <property type="evidence" value="ECO:0000314"/>
    <property type="project" value="UniProtKB"/>
</dbReference>
<dbReference type="GO" id="GO:0042149">
    <property type="term" value="P:cellular response to glucose starvation"/>
    <property type="evidence" value="ECO:0007669"/>
    <property type="project" value="Ensembl"/>
</dbReference>
<dbReference type="GO" id="GO:0071456">
    <property type="term" value="P:cellular response to hypoxia"/>
    <property type="evidence" value="ECO:0007669"/>
    <property type="project" value="Ensembl"/>
</dbReference>
<dbReference type="GO" id="GO:1990253">
    <property type="term" value="P:cellular response to leucine starvation"/>
    <property type="evidence" value="ECO:0000314"/>
    <property type="project" value="MGI"/>
</dbReference>
<dbReference type="GO" id="GO:0034599">
    <property type="term" value="P:cellular response to oxidative stress"/>
    <property type="evidence" value="ECO:0000315"/>
    <property type="project" value="UniProtKB"/>
</dbReference>
<dbReference type="GO" id="GO:0032922">
    <property type="term" value="P:circadian regulation of gene expression"/>
    <property type="evidence" value="ECO:0000315"/>
    <property type="project" value="UniProtKB"/>
</dbReference>
<dbReference type="GO" id="GO:0007623">
    <property type="term" value="P:circadian rhythm"/>
    <property type="evidence" value="ECO:0000270"/>
    <property type="project" value="UniProtKB"/>
</dbReference>
<dbReference type="GO" id="GO:0035162">
    <property type="term" value="P:embryonic hemopoiesis"/>
    <property type="evidence" value="ECO:0000315"/>
    <property type="project" value="UniProtKB"/>
</dbReference>
<dbReference type="GO" id="GO:0030968">
    <property type="term" value="P:endoplasmic reticulum unfolded protein response"/>
    <property type="evidence" value="ECO:0000314"/>
    <property type="project" value="UniProtKB"/>
</dbReference>
<dbReference type="GO" id="GO:0007214">
    <property type="term" value="P:gamma-aminobutyric acid signaling pathway"/>
    <property type="evidence" value="ECO:0007669"/>
    <property type="project" value="Ensembl"/>
</dbReference>
<dbReference type="GO" id="GO:0006094">
    <property type="term" value="P:gluconeogenesis"/>
    <property type="evidence" value="ECO:0000314"/>
    <property type="project" value="MGI"/>
</dbReference>
<dbReference type="GO" id="GO:0140468">
    <property type="term" value="P:HRI-mediated signaling"/>
    <property type="evidence" value="ECO:0000250"/>
    <property type="project" value="UniProtKB"/>
</dbReference>
<dbReference type="GO" id="GO:0140467">
    <property type="term" value="P:integrated stress response signaling"/>
    <property type="evidence" value="ECO:0000315"/>
    <property type="project" value="UniProtKB"/>
</dbReference>
<dbReference type="GO" id="GO:0006874">
    <property type="term" value="P:intracellular calcium ion homeostasis"/>
    <property type="evidence" value="ECO:0000315"/>
    <property type="project" value="MGI"/>
</dbReference>
<dbReference type="GO" id="GO:0070059">
    <property type="term" value="P:intrinsic apoptotic signaling pathway in response to endoplasmic reticulum stress"/>
    <property type="evidence" value="ECO:0000314"/>
    <property type="project" value="UniProtKB"/>
</dbReference>
<dbReference type="GO" id="GO:0070982">
    <property type="term" value="P:L-asparagine metabolic process"/>
    <property type="evidence" value="ECO:0007669"/>
    <property type="project" value="Ensembl"/>
</dbReference>
<dbReference type="GO" id="GO:0070309">
    <property type="term" value="P:lens fiber cell morphogenesis"/>
    <property type="evidence" value="ECO:0000315"/>
    <property type="project" value="UniProtKB"/>
</dbReference>
<dbReference type="GO" id="GO:0042789">
    <property type="term" value="P:mRNA transcription by RNA polymerase II"/>
    <property type="evidence" value="ECO:0000314"/>
    <property type="project" value="UniProtKB"/>
</dbReference>
<dbReference type="GO" id="GO:0120163">
    <property type="term" value="P:negative regulation of cold-induced thermogenesis"/>
    <property type="evidence" value="ECO:0000315"/>
    <property type="project" value="YuBioLab"/>
</dbReference>
<dbReference type="GO" id="GO:1903377">
    <property type="term" value="P:negative regulation of oxidative stress-induced neuron intrinsic apoptotic signaling pathway"/>
    <property type="evidence" value="ECO:0007669"/>
    <property type="project" value="Ensembl"/>
</dbReference>
<dbReference type="GO" id="GO:0043267">
    <property type="term" value="P:negative regulation of potassium ion transport"/>
    <property type="evidence" value="ECO:0007669"/>
    <property type="project" value="Ensembl"/>
</dbReference>
<dbReference type="GO" id="GO:0000122">
    <property type="term" value="P:negative regulation of transcription by RNA polymerase II"/>
    <property type="evidence" value="ECO:0000315"/>
    <property type="project" value="UniProtKB"/>
</dbReference>
<dbReference type="GO" id="GO:0030182">
    <property type="term" value="P:neuron differentiation"/>
    <property type="evidence" value="ECO:0007669"/>
    <property type="project" value="Ensembl"/>
</dbReference>
<dbReference type="GO" id="GO:0036499">
    <property type="term" value="P:PERK-mediated unfolded protein response"/>
    <property type="evidence" value="ECO:0000314"/>
    <property type="project" value="UniProtKB"/>
</dbReference>
<dbReference type="GO" id="GO:0070169">
    <property type="term" value="P:positive regulation of biomineral tissue development"/>
    <property type="evidence" value="ECO:0000315"/>
    <property type="project" value="MGI"/>
</dbReference>
<dbReference type="GO" id="GO:0045893">
    <property type="term" value="P:positive regulation of DNA-templated transcription"/>
    <property type="evidence" value="ECO:0000314"/>
    <property type="project" value="UniProtKB"/>
</dbReference>
<dbReference type="GO" id="GO:0010628">
    <property type="term" value="P:positive regulation of gene expression"/>
    <property type="evidence" value="ECO:0000315"/>
    <property type="project" value="ParkinsonsUK-UCL"/>
</dbReference>
<dbReference type="GO" id="GO:0043525">
    <property type="term" value="P:positive regulation of neuron apoptotic process"/>
    <property type="evidence" value="ECO:0000315"/>
    <property type="project" value="UniProtKB"/>
</dbReference>
<dbReference type="GO" id="GO:2000120">
    <property type="term" value="P:positive regulation of sodium-dependent phosphate transport"/>
    <property type="evidence" value="ECO:0000315"/>
    <property type="project" value="MGI"/>
</dbReference>
<dbReference type="GO" id="GO:0045943">
    <property type="term" value="P:positive regulation of transcription by RNA polymerase I"/>
    <property type="evidence" value="ECO:0007669"/>
    <property type="project" value="Ensembl"/>
</dbReference>
<dbReference type="GO" id="GO:0045944">
    <property type="term" value="P:positive regulation of transcription by RNA polymerase II"/>
    <property type="evidence" value="ECO:0000314"/>
    <property type="project" value="UniProtKB"/>
</dbReference>
<dbReference type="GO" id="GO:1905461">
    <property type="term" value="P:positive regulation of vascular associated smooth muscle cell apoptotic process"/>
    <property type="evidence" value="ECO:0000315"/>
    <property type="project" value="MGI"/>
</dbReference>
<dbReference type="GO" id="GO:0010575">
    <property type="term" value="P:positive regulation of vascular endothelial growth factor production"/>
    <property type="evidence" value="ECO:0007669"/>
    <property type="project" value="Ensembl"/>
</dbReference>
<dbReference type="GO" id="GO:0006355">
    <property type="term" value="P:regulation of DNA-templated transcription"/>
    <property type="evidence" value="ECO:0000314"/>
    <property type="project" value="MGI"/>
</dbReference>
<dbReference type="GO" id="GO:0045667">
    <property type="term" value="P:regulation of osteoblast differentiation"/>
    <property type="evidence" value="ECO:0000315"/>
    <property type="project" value="UniProtKB"/>
</dbReference>
<dbReference type="GO" id="GO:0048167">
    <property type="term" value="P:regulation of synaptic plasticity"/>
    <property type="evidence" value="ECO:0000315"/>
    <property type="project" value="UniProtKB"/>
</dbReference>
<dbReference type="GO" id="GO:0006357">
    <property type="term" value="P:regulation of transcription by RNA polymerase II"/>
    <property type="evidence" value="ECO:0000314"/>
    <property type="project" value="MGI"/>
</dbReference>
<dbReference type="GO" id="GO:0034976">
    <property type="term" value="P:response to endoplasmic reticulum stress"/>
    <property type="evidence" value="ECO:0000314"/>
    <property type="project" value="UniProtKB"/>
</dbReference>
<dbReference type="GO" id="GO:1990737">
    <property type="term" value="P:response to manganese-induced endoplasmic reticulum stress"/>
    <property type="evidence" value="ECO:0007669"/>
    <property type="project" value="Ensembl"/>
</dbReference>
<dbReference type="GO" id="GO:0009636">
    <property type="term" value="P:response to toxic substance"/>
    <property type="evidence" value="ECO:0007669"/>
    <property type="project" value="Ensembl"/>
</dbReference>
<dbReference type="GO" id="GO:0006366">
    <property type="term" value="P:transcription by RNA polymerase II"/>
    <property type="evidence" value="ECO:0000316"/>
    <property type="project" value="MGI"/>
</dbReference>
<dbReference type="CDD" id="cd14692">
    <property type="entry name" value="bZIP_ATF4"/>
    <property type="match status" value="1"/>
</dbReference>
<dbReference type="FunFam" id="1.20.5.170:FF:000021">
    <property type="entry name" value="Cyclic AMP-dependent transcription factor ATF-4"/>
    <property type="match status" value="1"/>
</dbReference>
<dbReference type="Gene3D" id="1.20.5.170">
    <property type="match status" value="1"/>
</dbReference>
<dbReference type="InterPro" id="IPR004827">
    <property type="entry name" value="bZIP"/>
</dbReference>
<dbReference type="InterPro" id="IPR046347">
    <property type="entry name" value="bZIP_sf"/>
</dbReference>
<dbReference type="PANTHER" id="PTHR13044">
    <property type="entry name" value="ACTIVATING TRANSCRIPTION FACTOR ATF 4/5"/>
    <property type="match status" value="1"/>
</dbReference>
<dbReference type="PANTHER" id="PTHR13044:SF2">
    <property type="entry name" value="CYCLIC AMP-DEPENDENT TRANSCRIPTION FACTOR ATF-4"/>
    <property type="match status" value="1"/>
</dbReference>
<dbReference type="Pfam" id="PF00170">
    <property type="entry name" value="bZIP_1"/>
    <property type="match status" value="1"/>
</dbReference>
<dbReference type="SMART" id="SM00338">
    <property type="entry name" value="BRLZ"/>
    <property type="match status" value="1"/>
</dbReference>
<dbReference type="SUPFAM" id="SSF57959">
    <property type="entry name" value="Leucine zipper domain"/>
    <property type="match status" value="1"/>
</dbReference>
<dbReference type="PROSITE" id="PS50217">
    <property type="entry name" value="BZIP"/>
    <property type="match status" value="1"/>
</dbReference>
<dbReference type="PROSITE" id="PS00036">
    <property type="entry name" value="BZIP_BASIC"/>
    <property type="match status" value="1"/>
</dbReference>